<accession>P0AFL7</accession>
<accession>P29014</accession>
<accession>P76981</accession>
<organism>
    <name type="scientific">Escherichia coli O6:H1 (strain CFT073 / ATCC 700928 / UPEC)</name>
    <dbReference type="NCBI Taxonomy" id="199310"/>
    <lineage>
        <taxon>Bacteria</taxon>
        <taxon>Pseudomonadati</taxon>
        <taxon>Pseudomonadota</taxon>
        <taxon>Gammaproteobacteria</taxon>
        <taxon>Enterobacterales</taxon>
        <taxon>Enterobacteriaceae</taxon>
        <taxon>Escherichia</taxon>
    </lineage>
</organism>
<protein>
    <recommendedName>
        <fullName evidence="2">Exopolyphosphatase</fullName>
        <shortName evidence="2">ExopolyPase</shortName>
        <ecNumber evidence="2">3.6.1.11</ecNumber>
    </recommendedName>
</protein>
<comment type="function">
    <text evidence="2">Degradation of inorganic polyphosphates (polyP). Releases orthophosphate processively from the ends of the polyP chain.</text>
</comment>
<comment type="catalytic activity">
    <reaction evidence="2">
        <text>[phosphate](n) + H2O = [phosphate](n-1) + phosphate + H(+)</text>
        <dbReference type="Rhea" id="RHEA:21528"/>
        <dbReference type="Rhea" id="RHEA-COMP:9859"/>
        <dbReference type="Rhea" id="RHEA-COMP:14279"/>
        <dbReference type="ChEBI" id="CHEBI:15377"/>
        <dbReference type="ChEBI" id="CHEBI:15378"/>
        <dbReference type="ChEBI" id="CHEBI:16838"/>
        <dbReference type="ChEBI" id="CHEBI:43474"/>
        <dbReference type="EC" id="3.6.1.11"/>
    </reaction>
</comment>
<comment type="cofactor">
    <cofactor evidence="2">
        <name>Mg(2+)</name>
        <dbReference type="ChEBI" id="CHEBI:18420"/>
    </cofactor>
</comment>
<comment type="subunit">
    <text evidence="2">Homodimer.</text>
</comment>
<comment type="subcellular location">
    <subcellularLocation>
        <location evidence="2">Cell membrane</location>
        <topology evidence="2">Peripheral membrane protein</topology>
    </subcellularLocation>
</comment>
<comment type="similarity">
    <text evidence="3">Belongs to the GppA/Ppx family.</text>
</comment>
<gene>
    <name type="primary">ppx</name>
    <name type="ordered locus">c3020</name>
</gene>
<proteinExistence type="inferred from homology"/>
<keyword id="KW-1003">Cell membrane</keyword>
<keyword id="KW-0378">Hydrolase</keyword>
<keyword id="KW-0460">Magnesium</keyword>
<keyword id="KW-0472">Membrane</keyword>
<keyword id="KW-1185">Reference proteome</keyword>
<evidence type="ECO:0000250" key="1"/>
<evidence type="ECO:0000250" key="2">
    <source>
        <dbReference type="UniProtKB" id="P0AFL6"/>
    </source>
</evidence>
<evidence type="ECO:0000305" key="3"/>
<sequence>MPIHDKSPRPQEFAAVDLGSNSFHMVIARVVDGAMQIIGRLKQRVHLADGLGPDNMLSEEAMTRGLNCLSLFAERLQGFSPASVCIVGTHTLRQALNATDFLKRAEKVIPYPIEIISGNEEARLIFMGVEHTQPEKGRKLVIDIGGGSTELVIGENFEPILVESRRMGCVSFAQLYFPGGVINKENFQRARMAAAQKLETLTWQFRIQGWNVAMGASGTIKAAHEVLMEMGEKDGIITPERLEKLVKEVLRHRNFASLSLPGLSEERKTVFVPGLAILCGVFDALAIRELRLSDGALREGVLYEMEGRFRHQDVRSRTASSLANQYHIDSEQARRVLDTTMQMYEQWREQQPKLAHPQLEALLRWAAMLHEVGLNINHSGLHRHSAYILQNSDLPGFNQEQQLMMATLVRYHRKAIKLDDLPRFTLFKKKQFLPLIQLLRLGVLLNNQRQATTTPPTLTLITDDSHWTLRFPHDWFSQNALVLLDLEKEQEYWEGVAGWRLKIEEESTPEIAA</sequence>
<feature type="initiator methionine" description="Removed" evidence="1">
    <location>
        <position position="1"/>
    </location>
</feature>
<feature type="chain" id="PRO_0000194301" description="Exopolyphosphatase">
    <location>
        <begin position="2"/>
        <end position="513"/>
    </location>
</feature>
<name>PPX_ECOL6</name>
<reference key="1">
    <citation type="journal article" date="2002" name="Proc. Natl. Acad. Sci. U.S.A.">
        <title>Extensive mosaic structure revealed by the complete genome sequence of uropathogenic Escherichia coli.</title>
        <authorList>
            <person name="Welch R.A."/>
            <person name="Burland V."/>
            <person name="Plunkett G. III"/>
            <person name="Redford P."/>
            <person name="Roesch P."/>
            <person name="Rasko D."/>
            <person name="Buckles E.L."/>
            <person name="Liou S.-R."/>
            <person name="Boutin A."/>
            <person name="Hackett J."/>
            <person name="Stroud D."/>
            <person name="Mayhew G.F."/>
            <person name="Rose D.J."/>
            <person name="Zhou S."/>
            <person name="Schwartz D.C."/>
            <person name="Perna N.T."/>
            <person name="Mobley H.L.T."/>
            <person name="Donnenberg M.S."/>
            <person name="Blattner F.R."/>
        </authorList>
    </citation>
    <scope>NUCLEOTIDE SEQUENCE [LARGE SCALE GENOMIC DNA]</scope>
    <source>
        <strain>CFT073 / ATCC 700928 / UPEC</strain>
    </source>
</reference>
<dbReference type="EC" id="3.6.1.11" evidence="2"/>
<dbReference type="EMBL" id="AE014075">
    <property type="protein sequence ID" value="AAN81470.1"/>
    <property type="molecule type" value="Genomic_DNA"/>
</dbReference>
<dbReference type="RefSeq" id="WP_001121363.1">
    <property type="nucleotide sequence ID" value="NZ_CP051263.1"/>
</dbReference>
<dbReference type="SMR" id="P0AFL7"/>
<dbReference type="STRING" id="199310.c3020"/>
<dbReference type="GeneID" id="93774634"/>
<dbReference type="KEGG" id="ecc:c3020"/>
<dbReference type="eggNOG" id="COG0248">
    <property type="taxonomic scope" value="Bacteria"/>
</dbReference>
<dbReference type="HOGENOM" id="CLU_025908_4_0_6"/>
<dbReference type="BioCyc" id="ECOL199310:C3020-MONOMER"/>
<dbReference type="Proteomes" id="UP000001410">
    <property type="component" value="Chromosome"/>
</dbReference>
<dbReference type="GO" id="GO:0005886">
    <property type="term" value="C:plasma membrane"/>
    <property type="evidence" value="ECO:0007669"/>
    <property type="project" value="UniProtKB-SubCell"/>
</dbReference>
<dbReference type="GO" id="GO:0004309">
    <property type="term" value="F:exopolyphosphatase activity"/>
    <property type="evidence" value="ECO:0007669"/>
    <property type="project" value="UniProtKB-EC"/>
</dbReference>
<dbReference type="GO" id="GO:0006798">
    <property type="term" value="P:polyphosphate catabolic process"/>
    <property type="evidence" value="ECO:0007669"/>
    <property type="project" value="TreeGrafter"/>
</dbReference>
<dbReference type="CDD" id="cd24116">
    <property type="entry name" value="ASKHA_NBD_EcPPX-like"/>
    <property type="match status" value="1"/>
</dbReference>
<dbReference type="FunFam" id="1.10.3210.10:FF:000006">
    <property type="entry name" value="Exopolyphosphatase"/>
    <property type="match status" value="1"/>
</dbReference>
<dbReference type="FunFam" id="3.30.70.2260:FF:000001">
    <property type="entry name" value="Exopolyphosphatase"/>
    <property type="match status" value="1"/>
</dbReference>
<dbReference type="FunFam" id="3.30.420.150:FF:000001">
    <property type="entry name" value="Guanosine-5'-triphosphate,3'-diphosphate pyrophosphatase"/>
    <property type="match status" value="1"/>
</dbReference>
<dbReference type="FunFam" id="3.30.420.40:FF:000023">
    <property type="entry name" value="Guanosine-5'-triphosphate,3'-diphosphate pyrophosphatase"/>
    <property type="match status" value="1"/>
</dbReference>
<dbReference type="Gene3D" id="3.30.420.40">
    <property type="match status" value="1"/>
</dbReference>
<dbReference type="Gene3D" id="3.30.70.2260">
    <property type="match status" value="1"/>
</dbReference>
<dbReference type="Gene3D" id="3.30.420.150">
    <property type="entry name" value="Exopolyphosphatase. Domain 2"/>
    <property type="match status" value="1"/>
</dbReference>
<dbReference type="Gene3D" id="1.10.3210.10">
    <property type="entry name" value="Hypothetical protein af1432"/>
    <property type="match status" value="1"/>
</dbReference>
<dbReference type="InterPro" id="IPR043129">
    <property type="entry name" value="ATPase_NBD"/>
</dbReference>
<dbReference type="InterPro" id="IPR022371">
    <property type="entry name" value="Exopolyphosphatase"/>
</dbReference>
<dbReference type="InterPro" id="IPR050273">
    <property type="entry name" value="GppA/Ppx_hydrolase"/>
</dbReference>
<dbReference type="InterPro" id="IPR048950">
    <property type="entry name" value="Ppx_GppA_C"/>
</dbReference>
<dbReference type="InterPro" id="IPR003695">
    <property type="entry name" value="Ppx_GppA_N"/>
</dbReference>
<dbReference type="InterPro" id="IPR030673">
    <property type="entry name" value="PyroPPase_GppA_Ppx"/>
</dbReference>
<dbReference type="NCBIfam" id="TIGR03706">
    <property type="entry name" value="exo_poly_only"/>
    <property type="match status" value="1"/>
</dbReference>
<dbReference type="NCBIfam" id="NF008108">
    <property type="entry name" value="PRK10854.1"/>
    <property type="match status" value="1"/>
</dbReference>
<dbReference type="PANTHER" id="PTHR30005">
    <property type="entry name" value="EXOPOLYPHOSPHATASE"/>
    <property type="match status" value="1"/>
</dbReference>
<dbReference type="PANTHER" id="PTHR30005:SF14">
    <property type="entry name" value="EXOPOLYPHOSPHATASE"/>
    <property type="match status" value="1"/>
</dbReference>
<dbReference type="Pfam" id="PF02541">
    <property type="entry name" value="Ppx-GppA"/>
    <property type="match status" value="1"/>
</dbReference>
<dbReference type="Pfam" id="PF21447">
    <property type="entry name" value="Ppx-GppA_III"/>
    <property type="match status" value="1"/>
</dbReference>
<dbReference type="PIRSF" id="PIRSF001267">
    <property type="entry name" value="Pyrophosphatase_GppA_Ppx"/>
    <property type="match status" value="1"/>
</dbReference>
<dbReference type="SUPFAM" id="SSF53067">
    <property type="entry name" value="Actin-like ATPase domain"/>
    <property type="match status" value="2"/>
</dbReference>
<dbReference type="SUPFAM" id="SSF109604">
    <property type="entry name" value="HD-domain/PDEase-like"/>
    <property type="match status" value="1"/>
</dbReference>